<reference key="1">
    <citation type="journal article" date="2007" name="PLoS Genet.">
        <title>Patterns and implications of gene gain and loss in the evolution of Prochlorococcus.</title>
        <authorList>
            <person name="Kettler G.C."/>
            <person name="Martiny A.C."/>
            <person name="Huang K."/>
            <person name="Zucker J."/>
            <person name="Coleman M.L."/>
            <person name="Rodrigue S."/>
            <person name="Chen F."/>
            <person name="Lapidus A."/>
            <person name="Ferriera S."/>
            <person name="Johnson J."/>
            <person name="Steglich C."/>
            <person name="Church G.M."/>
            <person name="Richardson P."/>
            <person name="Chisholm S.W."/>
        </authorList>
    </citation>
    <scope>NUCLEOTIDE SEQUENCE [LARGE SCALE GENOMIC DNA]</scope>
    <source>
        <strain>NATL2A</strain>
    </source>
</reference>
<sequence length="47" mass="5312">MALINFDLLAELPLAYQAFAPTVDVLPLIPLFFFLLVFVWQAAVGFR</sequence>
<evidence type="ECO:0000255" key="1">
    <source>
        <dbReference type="HAMAP-Rule" id="MF_00441"/>
    </source>
</evidence>
<evidence type="ECO:0000305" key="2"/>
<protein>
    <recommendedName>
        <fullName evidence="1">Photosystem II reaction center protein K</fullName>
        <shortName evidence="1">PSII-K</shortName>
    </recommendedName>
</protein>
<comment type="function">
    <text evidence="1">One of the components of the core complex of photosystem II (PSII). PSII is a light-driven water:plastoquinone oxidoreductase that uses light energy to abstract electrons from H(2)O, generating O(2) and a proton gradient subsequently used for ATP formation. It consists of a core antenna complex that captures photons, and an electron transfer chain that converts photonic excitation into a charge separation.</text>
</comment>
<comment type="subunit">
    <text evidence="2">PSII is composed of 1 copy each of membrane proteins PsbA, PsbB, PsbC, PsbD, PsbE, PsbF, PsbH, PsbI, PsbJ, PsbK, PsbL, PsbM, PsbT, PsbX, PsbY, Psb30/Ycf12, peripheral proteins PsbO, CyanoQ (PsbQ), PsbU, PsbV and a large number of cofactors. It forms dimeric complexes.</text>
</comment>
<comment type="subcellular location">
    <subcellularLocation>
        <location evidence="1">Cellular thylakoid membrane</location>
        <topology evidence="1">Single-pass membrane protein</topology>
    </subcellularLocation>
</comment>
<comment type="similarity">
    <text evidence="1">Belongs to the PsbK family.</text>
</comment>
<gene>
    <name evidence="1" type="primary">psbK</name>
    <name type="ordered locus">PMN2A_1638</name>
</gene>
<name>PSBK_PROMT</name>
<dbReference type="EMBL" id="CP000095">
    <property type="protein sequence ID" value="AAZ59126.1"/>
    <property type="molecule type" value="Genomic_DNA"/>
</dbReference>
<dbReference type="RefSeq" id="WP_011294271.1">
    <property type="nucleotide sequence ID" value="NC_007335.2"/>
</dbReference>
<dbReference type="SMR" id="Q46HA2"/>
<dbReference type="STRING" id="59920.PMN2A_1638"/>
<dbReference type="KEGG" id="pmn:PMN2A_1638"/>
<dbReference type="HOGENOM" id="CLU_174355_0_0_3"/>
<dbReference type="Proteomes" id="UP000002535">
    <property type="component" value="Chromosome"/>
</dbReference>
<dbReference type="GO" id="GO:0009539">
    <property type="term" value="C:photosystem II reaction center"/>
    <property type="evidence" value="ECO:0007669"/>
    <property type="project" value="InterPro"/>
</dbReference>
<dbReference type="GO" id="GO:0031676">
    <property type="term" value="C:plasma membrane-derived thylakoid membrane"/>
    <property type="evidence" value="ECO:0007669"/>
    <property type="project" value="UniProtKB-SubCell"/>
</dbReference>
<dbReference type="GO" id="GO:0015979">
    <property type="term" value="P:photosynthesis"/>
    <property type="evidence" value="ECO:0007669"/>
    <property type="project" value="UniProtKB-UniRule"/>
</dbReference>
<dbReference type="HAMAP" id="MF_00441">
    <property type="entry name" value="PSII_PsbK"/>
    <property type="match status" value="1"/>
</dbReference>
<dbReference type="InterPro" id="IPR003687">
    <property type="entry name" value="PSII_PsbK"/>
</dbReference>
<dbReference type="InterPro" id="IPR037270">
    <property type="entry name" value="PSII_PsbK_sf"/>
</dbReference>
<dbReference type="NCBIfam" id="NF002715">
    <property type="entry name" value="PRK02553.1"/>
    <property type="match status" value="1"/>
</dbReference>
<dbReference type="PANTHER" id="PTHR35325">
    <property type="match status" value="1"/>
</dbReference>
<dbReference type="PANTHER" id="PTHR35325:SF1">
    <property type="entry name" value="PHOTOSYSTEM II REACTION CENTER PROTEIN K"/>
    <property type="match status" value="1"/>
</dbReference>
<dbReference type="Pfam" id="PF02533">
    <property type="entry name" value="PsbK"/>
    <property type="match status" value="1"/>
</dbReference>
<dbReference type="SUPFAM" id="SSF161037">
    <property type="entry name" value="Photosystem II reaction center protein K, PsbK"/>
    <property type="match status" value="1"/>
</dbReference>
<accession>Q46HA2</accession>
<proteinExistence type="inferred from homology"/>
<keyword id="KW-0472">Membrane</keyword>
<keyword id="KW-0602">Photosynthesis</keyword>
<keyword id="KW-0604">Photosystem II</keyword>
<keyword id="KW-0674">Reaction center</keyword>
<keyword id="KW-1185">Reference proteome</keyword>
<keyword id="KW-0793">Thylakoid</keyword>
<keyword id="KW-0812">Transmembrane</keyword>
<keyword id="KW-1133">Transmembrane helix</keyword>
<feature type="propeptide" id="PRO_0000316080" evidence="1">
    <location>
        <begin position="1"/>
        <end position="10"/>
    </location>
</feature>
<feature type="chain" id="PRO_1000025983" description="Photosystem II reaction center protein K" evidence="1">
    <location>
        <begin position="11"/>
        <end position="47"/>
    </location>
</feature>
<feature type="transmembrane region" description="Helical" evidence="1">
    <location>
        <begin position="26"/>
        <end position="46"/>
    </location>
</feature>
<organism>
    <name type="scientific">Prochlorococcus marinus (strain NATL2A)</name>
    <dbReference type="NCBI Taxonomy" id="59920"/>
    <lineage>
        <taxon>Bacteria</taxon>
        <taxon>Bacillati</taxon>
        <taxon>Cyanobacteriota</taxon>
        <taxon>Cyanophyceae</taxon>
        <taxon>Synechococcales</taxon>
        <taxon>Prochlorococcaceae</taxon>
        <taxon>Prochlorococcus</taxon>
    </lineage>
</organism>